<keyword id="KW-1185">Reference proteome</keyword>
<reference key="1">
    <citation type="journal article" date="2002" name="Genome Res.">
        <title>The genome of Methanosarcina acetivorans reveals extensive metabolic and physiological diversity.</title>
        <authorList>
            <person name="Galagan J.E."/>
            <person name="Nusbaum C."/>
            <person name="Roy A."/>
            <person name="Endrizzi M.G."/>
            <person name="Macdonald P."/>
            <person name="FitzHugh W."/>
            <person name="Calvo S."/>
            <person name="Engels R."/>
            <person name="Smirnov S."/>
            <person name="Atnoor D."/>
            <person name="Brown A."/>
            <person name="Allen N."/>
            <person name="Naylor J."/>
            <person name="Stange-Thomann N."/>
            <person name="DeArellano K."/>
            <person name="Johnson R."/>
            <person name="Linton L."/>
            <person name="McEwan P."/>
            <person name="McKernan K."/>
            <person name="Talamas J."/>
            <person name="Tirrell A."/>
            <person name="Ye W."/>
            <person name="Zimmer A."/>
            <person name="Barber R.D."/>
            <person name="Cann I."/>
            <person name="Graham D.E."/>
            <person name="Grahame D.A."/>
            <person name="Guss A.M."/>
            <person name="Hedderich R."/>
            <person name="Ingram-Smith C."/>
            <person name="Kuettner H.C."/>
            <person name="Krzycki J.A."/>
            <person name="Leigh J.A."/>
            <person name="Li W."/>
            <person name="Liu J."/>
            <person name="Mukhopadhyay B."/>
            <person name="Reeve J.N."/>
            <person name="Smith K."/>
            <person name="Springer T.A."/>
            <person name="Umayam L.A."/>
            <person name="White O."/>
            <person name="White R.H."/>
            <person name="de Macario E.C."/>
            <person name="Ferry J.G."/>
            <person name="Jarrell K.F."/>
            <person name="Jing H."/>
            <person name="Macario A.J.L."/>
            <person name="Paulsen I.T."/>
            <person name="Pritchett M."/>
            <person name="Sowers K.R."/>
            <person name="Swanson R.V."/>
            <person name="Zinder S.H."/>
            <person name="Lander E."/>
            <person name="Metcalf W.W."/>
            <person name="Birren B."/>
        </authorList>
    </citation>
    <scope>NUCLEOTIDE SEQUENCE [LARGE SCALE GENOMIC DNA]</scope>
    <source>
        <strain>ATCC 35395 / DSM 2834 / JCM 12185 / C2A</strain>
    </source>
</reference>
<proteinExistence type="inferred from homology"/>
<dbReference type="EMBL" id="AE010299">
    <property type="protein sequence ID" value="AAM06490.1"/>
    <property type="molecule type" value="Genomic_DNA"/>
</dbReference>
<dbReference type="EnsemblBacteria" id="AAM06490">
    <property type="protein sequence ID" value="AAM06490"/>
    <property type="gene ID" value="MA_3117"/>
</dbReference>
<dbReference type="KEGG" id="mac:MA_3117"/>
<dbReference type="HOGENOM" id="CLU_106567_0_0_2"/>
<dbReference type="InParanoid" id="Q8TLC0"/>
<dbReference type="PhylomeDB" id="Q8TLC0"/>
<dbReference type="Proteomes" id="UP000002487">
    <property type="component" value="Chromosome"/>
</dbReference>
<dbReference type="InterPro" id="IPR008887">
    <property type="entry name" value="UPF0228"/>
</dbReference>
<dbReference type="Pfam" id="PF05727">
    <property type="entry name" value="UPF0228"/>
    <property type="match status" value="1"/>
</dbReference>
<sequence>MIDLNKISKVVVVFIVLLTFLVLMMQSQEVKVAGLLIQFENETTEPEVTAILENYDIPVNYTIDYNSNIGRGVYYVKVDEDKINELRKNENLISEIELKKGNYNIIILSEEFVPDENFLTILEKNNLQLKKVVVCYIHFGDGPADWVVGKNCILERDAIRIKNELETNEKVLIVGLDDIEG</sequence>
<protein>
    <recommendedName>
        <fullName>UPF0228 protein MA_3117</fullName>
    </recommendedName>
</protein>
<organism>
    <name type="scientific">Methanosarcina acetivorans (strain ATCC 35395 / DSM 2834 / JCM 12185 / C2A)</name>
    <dbReference type="NCBI Taxonomy" id="188937"/>
    <lineage>
        <taxon>Archaea</taxon>
        <taxon>Methanobacteriati</taxon>
        <taxon>Methanobacteriota</taxon>
        <taxon>Stenosarchaea group</taxon>
        <taxon>Methanomicrobia</taxon>
        <taxon>Methanosarcinales</taxon>
        <taxon>Methanosarcinaceae</taxon>
        <taxon>Methanosarcina</taxon>
    </lineage>
</organism>
<evidence type="ECO:0000305" key="1"/>
<accession>Q8TLC0</accession>
<gene>
    <name type="ordered locus">MA_3117</name>
</gene>
<feature type="chain" id="PRO_0000220397" description="UPF0228 protein MA_3117">
    <location>
        <begin position="1"/>
        <end position="181"/>
    </location>
</feature>
<comment type="similarity">
    <text evidence="1">Belongs to the UPF0228 family.</text>
</comment>
<name>Y3117_METAC</name>